<comment type="function">
    <text evidence="1">Exhibits a very high intrinsic GTPase hydrolysis rate. Involved in the addition of a carboxymethylaminomethyl (cmnm) group at the wobble position (U34) of certain tRNAs, forming tRNA-cmnm(5)s(2)U34.</text>
</comment>
<comment type="cofactor">
    <cofactor evidence="1">
        <name>K(+)</name>
        <dbReference type="ChEBI" id="CHEBI:29103"/>
    </cofactor>
    <text evidence="1">Binds 1 potassium ion per subunit.</text>
</comment>
<comment type="subunit">
    <text evidence="1">Homodimer. Heterotetramer of two MnmE and two MnmG subunits.</text>
</comment>
<comment type="subcellular location">
    <subcellularLocation>
        <location evidence="1">Cytoplasm</location>
    </subcellularLocation>
</comment>
<comment type="similarity">
    <text evidence="1">Belongs to the TRAFAC class TrmE-Era-EngA-EngB-Septin-like GTPase superfamily. TrmE GTPase family.</text>
</comment>
<proteinExistence type="inferred from homology"/>
<sequence length="450" mass="49840">MYTKDTIVAIATPQGNGGIGIIRISGIDALEIAEKLTKKQLKPRYATFCNVYNDNEIIDHGIVIFFKAPLSYTGEDVVEIQAHGNPFILNLIIKAALNCGARMAKAGEFTERAFLNNKLDLAQAEAVADIINASSEIAAKSAAKSLQGDFSKEINNLLEKLIYLRMYVEASIDFPEEEINFLEDQKIHSSLEEIYKVILAIKNSCKQGVILAEGITLILVGKPNAGKSSLLNALAGKESAIVTSIAGTTRDIVKEHIQINGVPMHIIDTAGLRNSDDIIESEGIKRAIKKIQEADQVLFVTDDYTNSQVKFSDIKEIIPEFYDQIPKDIDITYVHNKIDLLKEVPHNHANHIYISAENNIGIDKLKEHILNKVGYTNQNESIYTARERHVTAINNAFEHIKLAKEQLELGNGELLAEELLIVQEYLNSITGEFSSDDLLGEIFSSFCIGK</sequence>
<accession>A7NCL5</accession>
<protein>
    <recommendedName>
        <fullName evidence="1">tRNA modification GTPase MnmE</fullName>
        <ecNumber evidence="1">3.6.-.-</ecNumber>
    </recommendedName>
</protein>
<dbReference type="EC" id="3.6.-.-" evidence="1"/>
<dbReference type="EMBL" id="CP000803">
    <property type="protein sequence ID" value="ABU61718.1"/>
    <property type="molecule type" value="Genomic_DNA"/>
</dbReference>
<dbReference type="RefSeq" id="WP_011457460.1">
    <property type="nucleotide sequence ID" value="NC_009749.1"/>
</dbReference>
<dbReference type="SMR" id="A7NCL5"/>
<dbReference type="KEGG" id="fta:FTA_1243"/>
<dbReference type="HOGENOM" id="CLU_019624_4_1_6"/>
<dbReference type="GO" id="GO:0005829">
    <property type="term" value="C:cytosol"/>
    <property type="evidence" value="ECO:0007669"/>
    <property type="project" value="TreeGrafter"/>
</dbReference>
<dbReference type="GO" id="GO:0005525">
    <property type="term" value="F:GTP binding"/>
    <property type="evidence" value="ECO:0007669"/>
    <property type="project" value="UniProtKB-UniRule"/>
</dbReference>
<dbReference type="GO" id="GO:0003924">
    <property type="term" value="F:GTPase activity"/>
    <property type="evidence" value="ECO:0007669"/>
    <property type="project" value="UniProtKB-UniRule"/>
</dbReference>
<dbReference type="GO" id="GO:0046872">
    <property type="term" value="F:metal ion binding"/>
    <property type="evidence" value="ECO:0007669"/>
    <property type="project" value="UniProtKB-KW"/>
</dbReference>
<dbReference type="GO" id="GO:0030488">
    <property type="term" value="P:tRNA methylation"/>
    <property type="evidence" value="ECO:0007669"/>
    <property type="project" value="TreeGrafter"/>
</dbReference>
<dbReference type="GO" id="GO:0002098">
    <property type="term" value="P:tRNA wobble uridine modification"/>
    <property type="evidence" value="ECO:0007669"/>
    <property type="project" value="TreeGrafter"/>
</dbReference>
<dbReference type="CDD" id="cd04164">
    <property type="entry name" value="trmE"/>
    <property type="match status" value="1"/>
</dbReference>
<dbReference type="CDD" id="cd14858">
    <property type="entry name" value="TrmE_N"/>
    <property type="match status" value="1"/>
</dbReference>
<dbReference type="Gene3D" id="3.40.50.300">
    <property type="entry name" value="P-loop containing nucleotide triphosphate hydrolases"/>
    <property type="match status" value="1"/>
</dbReference>
<dbReference type="Gene3D" id="3.30.1360.120">
    <property type="entry name" value="Probable tRNA modification gtpase trme, domain 1"/>
    <property type="match status" value="1"/>
</dbReference>
<dbReference type="Gene3D" id="1.20.120.430">
    <property type="entry name" value="tRNA modification GTPase MnmE domain 2"/>
    <property type="match status" value="1"/>
</dbReference>
<dbReference type="HAMAP" id="MF_00379">
    <property type="entry name" value="GTPase_MnmE"/>
    <property type="match status" value="1"/>
</dbReference>
<dbReference type="InterPro" id="IPR031168">
    <property type="entry name" value="G_TrmE"/>
</dbReference>
<dbReference type="InterPro" id="IPR006073">
    <property type="entry name" value="GTP-bd"/>
</dbReference>
<dbReference type="InterPro" id="IPR018948">
    <property type="entry name" value="GTP-bd_TrmE_N"/>
</dbReference>
<dbReference type="InterPro" id="IPR004520">
    <property type="entry name" value="GTPase_MnmE"/>
</dbReference>
<dbReference type="InterPro" id="IPR027368">
    <property type="entry name" value="MnmE_dom2"/>
</dbReference>
<dbReference type="InterPro" id="IPR025867">
    <property type="entry name" value="MnmE_helical"/>
</dbReference>
<dbReference type="InterPro" id="IPR027417">
    <property type="entry name" value="P-loop_NTPase"/>
</dbReference>
<dbReference type="InterPro" id="IPR005225">
    <property type="entry name" value="Small_GTP-bd"/>
</dbReference>
<dbReference type="InterPro" id="IPR027266">
    <property type="entry name" value="TrmE/GcvT_dom1"/>
</dbReference>
<dbReference type="NCBIfam" id="TIGR00450">
    <property type="entry name" value="mnmE_trmE_thdF"/>
    <property type="match status" value="1"/>
</dbReference>
<dbReference type="NCBIfam" id="NF003661">
    <property type="entry name" value="PRK05291.1-3"/>
    <property type="match status" value="1"/>
</dbReference>
<dbReference type="NCBIfam" id="TIGR00231">
    <property type="entry name" value="small_GTP"/>
    <property type="match status" value="1"/>
</dbReference>
<dbReference type="PANTHER" id="PTHR42714">
    <property type="entry name" value="TRNA MODIFICATION GTPASE GTPBP3"/>
    <property type="match status" value="1"/>
</dbReference>
<dbReference type="PANTHER" id="PTHR42714:SF2">
    <property type="entry name" value="TRNA MODIFICATION GTPASE GTPBP3, MITOCHONDRIAL"/>
    <property type="match status" value="1"/>
</dbReference>
<dbReference type="Pfam" id="PF01926">
    <property type="entry name" value="MMR_HSR1"/>
    <property type="match status" value="1"/>
</dbReference>
<dbReference type="Pfam" id="PF12631">
    <property type="entry name" value="MnmE_helical"/>
    <property type="match status" value="1"/>
</dbReference>
<dbReference type="Pfam" id="PF10396">
    <property type="entry name" value="TrmE_N"/>
    <property type="match status" value="1"/>
</dbReference>
<dbReference type="PRINTS" id="PR00326">
    <property type="entry name" value="GTP1OBG"/>
</dbReference>
<dbReference type="SUPFAM" id="SSF52540">
    <property type="entry name" value="P-loop containing nucleoside triphosphate hydrolases"/>
    <property type="match status" value="1"/>
</dbReference>
<dbReference type="SUPFAM" id="SSF116878">
    <property type="entry name" value="TrmE connector domain"/>
    <property type="match status" value="1"/>
</dbReference>
<dbReference type="PROSITE" id="PS51709">
    <property type="entry name" value="G_TRME"/>
    <property type="match status" value="1"/>
</dbReference>
<organism>
    <name type="scientific">Francisella tularensis subsp. holarctica (strain FTNF002-00 / FTA)</name>
    <dbReference type="NCBI Taxonomy" id="458234"/>
    <lineage>
        <taxon>Bacteria</taxon>
        <taxon>Pseudomonadati</taxon>
        <taxon>Pseudomonadota</taxon>
        <taxon>Gammaproteobacteria</taxon>
        <taxon>Thiotrichales</taxon>
        <taxon>Francisellaceae</taxon>
        <taxon>Francisella</taxon>
    </lineage>
</organism>
<keyword id="KW-0963">Cytoplasm</keyword>
<keyword id="KW-0342">GTP-binding</keyword>
<keyword id="KW-0378">Hydrolase</keyword>
<keyword id="KW-0460">Magnesium</keyword>
<keyword id="KW-0479">Metal-binding</keyword>
<keyword id="KW-0547">Nucleotide-binding</keyword>
<keyword id="KW-0630">Potassium</keyword>
<keyword id="KW-0819">tRNA processing</keyword>
<reference key="1">
    <citation type="journal article" date="2009" name="PLoS ONE">
        <title>Complete genome sequence of Francisella tularensis subspecies holarctica FTNF002-00.</title>
        <authorList>
            <person name="Barabote R.D."/>
            <person name="Xie G."/>
            <person name="Brettin T.S."/>
            <person name="Hinrichs S.H."/>
            <person name="Fey P.D."/>
            <person name="Jay J.J."/>
            <person name="Engle J.L."/>
            <person name="Godbole S.D."/>
            <person name="Noronha J.M."/>
            <person name="Scheuermann R.H."/>
            <person name="Zhou L.W."/>
            <person name="Lion C."/>
            <person name="Dempsey M.P."/>
        </authorList>
    </citation>
    <scope>NUCLEOTIDE SEQUENCE [LARGE SCALE GENOMIC DNA]</scope>
    <source>
        <strain>FTNF002-00 / FTA</strain>
    </source>
</reference>
<evidence type="ECO:0000255" key="1">
    <source>
        <dbReference type="HAMAP-Rule" id="MF_00379"/>
    </source>
</evidence>
<name>MNME_FRATF</name>
<gene>
    <name evidence="1" type="primary">mnmE</name>
    <name evidence="1" type="synonym">trmE</name>
    <name type="ordered locus">FTA_1243</name>
</gene>
<feature type="chain" id="PRO_1000060041" description="tRNA modification GTPase MnmE">
    <location>
        <begin position="1"/>
        <end position="450"/>
    </location>
</feature>
<feature type="domain" description="TrmE-type G">
    <location>
        <begin position="214"/>
        <end position="374"/>
    </location>
</feature>
<feature type="binding site" evidence="1">
    <location>
        <position position="23"/>
    </location>
    <ligand>
        <name>(6S)-5-formyl-5,6,7,8-tetrahydrofolate</name>
        <dbReference type="ChEBI" id="CHEBI:57457"/>
    </ligand>
</feature>
<feature type="binding site" evidence="1">
    <location>
        <position position="79"/>
    </location>
    <ligand>
        <name>(6S)-5-formyl-5,6,7,8-tetrahydrofolate</name>
        <dbReference type="ChEBI" id="CHEBI:57457"/>
    </ligand>
</feature>
<feature type="binding site" evidence="1">
    <location>
        <position position="118"/>
    </location>
    <ligand>
        <name>(6S)-5-formyl-5,6,7,8-tetrahydrofolate</name>
        <dbReference type="ChEBI" id="CHEBI:57457"/>
    </ligand>
</feature>
<feature type="binding site" evidence="1">
    <location>
        <begin position="224"/>
        <end position="229"/>
    </location>
    <ligand>
        <name>GTP</name>
        <dbReference type="ChEBI" id="CHEBI:37565"/>
    </ligand>
</feature>
<feature type="binding site" evidence="1">
    <location>
        <position position="224"/>
    </location>
    <ligand>
        <name>K(+)</name>
        <dbReference type="ChEBI" id="CHEBI:29103"/>
    </ligand>
</feature>
<feature type="binding site" evidence="1">
    <location>
        <position position="228"/>
    </location>
    <ligand>
        <name>Mg(2+)</name>
        <dbReference type="ChEBI" id="CHEBI:18420"/>
    </ligand>
</feature>
<feature type="binding site" evidence="1">
    <location>
        <begin position="243"/>
        <end position="249"/>
    </location>
    <ligand>
        <name>GTP</name>
        <dbReference type="ChEBI" id="CHEBI:37565"/>
    </ligand>
</feature>
<feature type="binding site" evidence="1">
    <location>
        <position position="243"/>
    </location>
    <ligand>
        <name>K(+)</name>
        <dbReference type="ChEBI" id="CHEBI:29103"/>
    </ligand>
</feature>
<feature type="binding site" evidence="1">
    <location>
        <position position="245"/>
    </location>
    <ligand>
        <name>K(+)</name>
        <dbReference type="ChEBI" id="CHEBI:29103"/>
    </ligand>
</feature>
<feature type="binding site" evidence="1">
    <location>
        <position position="248"/>
    </location>
    <ligand>
        <name>K(+)</name>
        <dbReference type="ChEBI" id="CHEBI:29103"/>
    </ligand>
</feature>
<feature type="binding site" evidence="1">
    <location>
        <position position="249"/>
    </location>
    <ligand>
        <name>Mg(2+)</name>
        <dbReference type="ChEBI" id="CHEBI:18420"/>
    </ligand>
</feature>
<feature type="binding site" evidence="1">
    <location>
        <begin position="268"/>
        <end position="271"/>
    </location>
    <ligand>
        <name>GTP</name>
        <dbReference type="ChEBI" id="CHEBI:37565"/>
    </ligand>
</feature>
<feature type="binding site" evidence="1">
    <location>
        <position position="450"/>
    </location>
    <ligand>
        <name>(6S)-5-formyl-5,6,7,8-tetrahydrofolate</name>
        <dbReference type="ChEBI" id="CHEBI:57457"/>
    </ligand>
</feature>